<gene>
    <name type="primary">traM</name>
</gene>
<dbReference type="EMBL" id="U67194">
    <property type="protein sequence ID" value="AAC64481.1"/>
    <property type="molecule type" value="Genomic_DNA"/>
</dbReference>
<dbReference type="RefSeq" id="WP_000718516.1">
    <property type="nucleotide sequence ID" value="NZ_MW574946.1"/>
</dbReference>
<dbReference type="SMR" id="P71198"/>
<dbReference type="GO" id="GO:0009372">
    <property type="term" value="P:quorum sensing"/>
    <property type="evidence" value="ECO:0007669"/>
    <property type="project" value="InterPro"/>
</dbReference>
<dbReference type="InterPro" id="IPR028140">
    <property type="entry name" value="TraM"/>
</dbReference>
<dbReference type="NCBIfam" id="NF010470">
    <property type="entry name" value="PRK13895.1"/>
    <property type="match status" value="1"/>
</dbReference>
<dbReference type="Pfam" id="PF11657">
    <property type="entry name" value="Activator-TraM"/>
    <property type="match status" value="1"/>
</dbReference>
<sequence length="146" mass="15581">MAADDKIEELIREIAAKHGIAVGRDDPILILQTINMKLMQDSASAQQEILDAFKSELESIAHRWGDDAKGKAERTLNAALAASKDAMTRGMQEGAKAAAEAVRREVEAVTAQLVAPIREARRVAMMNMVAAGMAVVAAGLALWASL</sequence>
<organism>
    <name type="scientific">Escherichia coli</name>
    <dbReference type="NCBI Taxonomy" id="562"/>
    <lineage>
        <taxon>Bacteria</taxon>
        <taxon>Pseudomonadati</taxon>
        <taxon>Pseudomonadota</taxon>
        <taxon>Gammaproteobacteria</taxon>
        <taxon>Enterobacterales</taxon>
        <taxon>Enterobacteriaceae</taxon>
        <taxon>Escherichia</taxon>
    </lineage>
</organism>
<accession>P71198</accession>
<comment type="similarity">
    <text evidence="1">To plasmid IncP-alpha RP4 TraM.</text>
</comment>
<name>TRAM5_ECOLX</name>
<keyword id="KW-0184">Conjugation</keyword>
<keyword id="KW-0614">Plasmid</keyword>
<geneLocation type="plasmid">
    <name>IncP-beta R751</name>
</geneLocation>
<reference key="1">
    <citation type="submission" date="1996-08" db="EMBL/GenBank/DDBJ databases">
        <authorList>
            <person name="Thomas C.M."/>
        </authorList>
    </citation>
    <scope>NUCLEOTIDE SEQUENCE [GENOMIC DNA]</scope>
</reference>
<evidence type="ECO:0000305" key="1"/>
<protein>
    <recommendedName>
        <fullName>Protein TraM</fullName>
    </recommendedName>
</protein>
<feature type="chain" id="PRO_0000068603" description="Protein TraM">
    <location>
        <begin position="1"/>
        <end position="146"/>
    </location>
</feature>
<proteinExistence type="predicted"/>